<keyword id="KW-0004">4Fe-4S</keyword>
<keyword id="KW-0408">Iron</keyword>
<keyword id="KW-0411">Iron-sulfur</keyword>
<keyword id="KW-0479">Metal-binding</keyword>
<keyword id="KW-0489">Methyltransferase</keyword>
<keyword id="KW-0698">rRNA processing</keyword>
<keyword id="KW-0949">S-adenosyl-L-methionine</keyword>
<keyword id="KW-0808">Transferase</keyword>
<proteinExistence type="inferred from homology"/>
<comment type="function">
    <text evidence="1">Catalyzes the formation of 5-methyl-uridine at position 1939 (m5U1939) in 23S rRNA.</text>
</comment>
<comment type="catalytic activity">
    <reaction evidence="1">
        <text>uridine(1939) in 23S rRNA + S-adenosyl-L-methionine = 5-methyluridine(1939) in 23S rRNA + S-adenosyl-L-homocysteine + H(+)</text>
        <dbReference type="Rhea" id="RHEA:42908"/>
        <dbReference type="Rhea" id="RHEA-COMP:10278"/>
        <dbReference type="Rhea" id="RHEA-COMP:10279"/>
        <dbReference type="ChEBI" id="CHEBI:15378"/>
        <dbReference type="ChEBI" id="CHEBI:57856"/>
        <dbReference type="ChEBI" id="CHEBI:59789"/>
        <dbReference type="ChEBI" id="CHEBI:65315"/>
        <dbReference type="ChEBI" id="CHEBI:74447"/>
        <dbReference type="EC" id="2.1.1.190"/>
    </reaction>
</comment>
<comment type="similarity">
    <text evidence="1">Belongs to the class I-like SAM-binding methyltransferase superfamily. RNA M5U methyltransferase family. RlmD subfamily.</text>
</comment>
<accession>A1RHE4</accession>
<organism>
    <name type="scientific">Shewanella sp. (strain W3-18-1)</name>
    <dbReference type="NCBI Taxonomy" id="351745"/>
    <lineage>
        <taxon>Bacteria</taxon>
        <taxon>Pseudomonadati</taxon>
        <taxon>Pseudomonadota</taxon>
        <taxon>Gammaproteobacteria</taxon>
        <taxon>Alteromonadales</taxon>
        <taxon>Shewanellaceae</taxon>
        <taxon>Shewanella</taxon>
    </lineage>
</organism>
<gene>
    <name evidence="1" type="primary">rlmD</name>
    <name type="synonym">rumA</name>
    <name type="ordered locus">Sputw3181_1246</name>
</gene>
<dbReference type="EC" id="2.1.1.190" evidence="1"/>
<dbReference type="EMBL" id="CP000503">
    <property type="protein sequence ID" value="ABM24089.1"/>
    <property type="molecule type" value="Genomic_DNA"/>
</dbReference>
<dbReference type="RefSeq" id="WP_011788596.1">
    <property type="nucleotide sequence ID" value="NC_008750.1"/>
</dbReference>
<dbReference type="SMR" id="A1RHE4"/>
<dbReference type="KEGG" id="shw:Sputw3181_1246"/>
<dbReference type="HOGENOM" id="CLU_014689_8_2_6"/>
<dbReference type="Proteomes" id="UP000002597">
    <property type="component" value="Chromosome"/>
</dbReference>
<dbReference type="GO" id="GO:0051539">
    <property type="term" value="F:4 iron, 4 sulfur cluster binding"/>
    <property type="evidence" value="ECO:0007669"/>
    <property type="project" value="UniProtKB-KW"/>
</dbReference>
<dbReference type="GO" id="GO:0005506">
    <property type="term" value="F:iron ion binding"/>
    <property type="evidence" value="ECO:0007669"/>
    <property type="project" value="UniProtKB-UniRule"/>
</dbReference>
<dbReference type="GO" id="GO:0003723">
    <property type="term" value="F:RNA binding"/>
    <property type="evidence" value="ECO:0007669"/>
    <property type="project" value="InterPro"/>
</dbReference>
<dbReference type="GO" id="GO:0070041">
    <property type="term" value="F:rRNA (uridine-C5-)-methyltransferase activity"/>
    <property type="evidence" value="ECO:0007669"/>
    <property type="project" value="UniProtKB-UniRule"/>
</dbReference>
<dbReference type="GO" id="GO:0070475">
    <property type="term" value="P:rRNA base methylation"/>
    <property type="evidence" value="ECO:0007669"/>
    <property type="project" value="TreeGrafter"/>
</dbReference>
<dbReference type="CDD" id="cd02440">
    <property type="entry name" value="AdoMet_MTases"/>
    <property type="match status" value="1"/>
</dbReference>
<dbReference type="FunFam" id="3.40.50.150:FF:000009">
    <property type="entry name" value="23S rRNA (Uracil(1939)-C(5))-methyltransferase RlmD"/>
    <property type="match status" value="1"/>
</dbReference>
<dbReference type="FunFam" id="2.40.50.140:FF:000097">
    <property type="entry name" value="23S rRNA (uracil(1939)-C(5))-methyltransferase RlmD"/>
    <property type="match status" value="1"/>
</dbReference>
<dbReference type="Gene3D" id="2.40.50.1070">
    <property type="match status" value="1"/>
</dbReference>
<dbReference type="Gene3D" id="2.40.50.140">
    <property type="entry name" value="Nucleic acid-binding proteins"/>
    <property type="match status" value="1"/>
</dbReference>
<dbReference type="Gene3D" id="3.40.50.150">
    <property type="entry name" value="Vaccinia Virus protein VP39"/>
    <property type="match status" value="1"/>
</dbReference>
<dbReference type="HAMAP" id="MF_01010">
    <property type="entry name" value="23SrRNA_methyltr_RlmD"/>
    <property type="match status" value="1"/>
</dbReference>
<dbReference type="InterPro" id="IPR001566">
    <property type="entry name" value="23S_rRNA_MeTrfase_RlmD"/>
</dbReference>
<dbReference type="InterPro" id="IPR030390">
    <property type="entry name" value="MeTrfase_TrmA_AS"/>
</dbReference>
<dbReference type="InterPro" id="IPR030391">
    <property type="entry name" value="MeTrfase_TrmA_CS"/>
</dbReference>
<dbReference type="InterPro" id="IPR012340">
    <property type="entry name" value="NA-bd_OB-fold"/>
</dbReference>
<dbReference type="InterPro" id="IPR029063">
    <property type="entry name" value="SAM-dependent_MTases_sf"/>
</dbReference>
<dbReference type="InterPro" id="IPR002792">
    <property type="entry name" value="TRAM_dom"/>
</dbReference>
<dbReference type="InterPro" id="IPR010280">
    <property type="entry name" value="U5_MeTrfase_fam"/>
</dbReference>
<dbReference type="NCBIfam" id="NF009639">
    <property type="entry name" value="PRK13168.1"/>
    <property type="match status" value="1"/>
</dbReference>
<dbReference type="NCBIfam" id="TIGR00479">
    <property type="entry name" value="rumA"/>
    <property type="match status" value="1"/>
</dbReference>
<dbReference type="PANTHER" id="PTHR11061:SF49">
    <property type="entry name" value="23S RRNA (URACIL(1939)-C(5))-METHYLTRANSFERASE RLMD"/>
    <property type="match status" value="1"/>
</dbReference>
<dbReference type="PANTHER" id="PTHR11061">
    <property type="entry name" value="RNA M5U METHYLTRANSFERASE"/>
    <property type="match status" value="1"/>
</dbReference>
<dbReference type="Pfam" id="PF01938">
    <property type="entry name" value="TRAM"/>
    <property type="match status" value="1"/>
</dbReference>
<dbReference type="Pfam" id="PF05958">
    <property type="entry name" value="tRNA_U5-meth_tr"/>
    <property type="match status" value="1"/>
</dbReference>
<dbReference type="SUPFAM" id="SSF50249">
    <property type="entry name" value="Nucleic acid-binding proteins"/>
    <property type="match status" value="1"/>
</dbReference>
<dbReference type="SUPFAM" id="SSF53335">
    <property type="entry name" value="S-adenosyl-L-methionine-dependent methyltransferases"/>
    <property type="match status" value="1"/>
</dbReference>
<dbReference type="PROSITE" id="PS51687">
    <property type="entry name" value="SAM_MT_RNA_M5U"/>
    <property type="match status" value="1"/>
</dbReference>
<dbReference type="PROSITE" id="PS50926">
    <property type="entry name" value="TRAM"/>
    <property type="match status" value="1"/>
</dbReference>
<dbReference type="PROSITE" id="PS01230">
    <property type="entry name" value="TRMA_1"/>
    <property type="match status" value="1"/>
</dbReference>
<dbReference type="PROSITE" id="PS01231">
    <property type="entry name" value="TRMA_2"/>
    <property type="match status" value="1"/>
</dbReference>
<feature type="chain" id="PRO_0000282066" description="23S rRNA (uracil(1939)-C(5))-methyltransferase RlmD">
    <location>
        <begin position="1"/>
        <end position="450"/>
    </location>
</feature>
<feature type="domain" description="TRAM" evidence="1">
    <location>
        <begin position="12"/>
        <end position="70"/>
    </location>
</feature>
<feature type="active site" description="Nucleophile" evidence="1">
    <location>
        <position position="406"/>
    </location>
</feature>
<feature type="binding site" evidence="1">
    <location>
        <position position="83"/>
    </location>
    <ligand>
        <name>[4Fe-4S] cluster</name>
        <dbReference type="ChEBI" id="CHEBI:49883"/>
    </ligand>
</feature>
<feature type="binding site" evidence="1">
    <location>
        <position position="89"/>
    </location>
    <ligand>
        <name>[4Fe-4S] cluster</name>
        <dbReference type="ChEBI" id="CHEBI:49883"/>
    </ligand>
</feature>
<feature type="binding site" evidence="1">
    <location>
        <position position="92"/>
    </location>
    <ligand>
        <name>[4Fe-4S] cluster</name>
        <dbReference type="ChEBI" id="CHEBI:49883"/>
    </ligand>
</feature>
<feature type="binding site" evidence="1">
    <location>
        <position position="171"/>
    </location>
    <ligand>
        <name>[4Fe-4S] cluster</name>
        <dbReference type="ChEBI" id="CHEBI:49883"/>
    </ligand>
</feature>
<feature type="binding site" evidence="1">
    <location>
        <position position="283"/>
    </location>
    <ligand>
        <name>S-adenosyl-L-methionine</name>
        <dbReference type="ChEBI" id="CHEBI:59789"/>
    </ligand>
</feature>
<feature type="binding site" evidence="1">
    <location>
        <position position="312"/>
    </location>
    <ligand>
        <name>S-adenosyl-L-methionine</name>
        <dbReference type="ChEBI" id="CHEBI:59789"/>
    </ligand>
</feature>
<feature type="binding site" evidence="1">
    <location>
        <position position="317"/>
    </location>
    <ligand>
        <name>S-adenosyl-L-methionine</name>
        <dbReference type="ChEBI" id="CHEBI:59789"/>
    </ligand>
</feature>
<feature type="binding site" evidence="1">
    <location>
        <position position="333"/>
    </location>
    <ligand>
        <name>S-adenosyl-L-methionine</name>
        <dbReference type="ChEBI" id="CHEBI:59789"/>
    </ligand>
</feature>
<feature type="binding site" evidence="1">
    <location>
        <position position="360"/>
    </location>
    <ligand>
        <name>S-adenosyl-L-methionine</name>
        <dbReference type="ChEBI" id="CHEBI:59789"/>
    </ligand>
</feature>
<feature type="binding site" evidence="1">
    <location>
        <position position="380"/>
    </location>
    <ligand>
        <name>S-adenosyl-L-methionine</name>
        <dbReference type="ChEBI" id="CHEBI:59789"/>
    </ligand>
</feature>
<evidence type="ECO:0000255" key="1">
    <source>
        <dbReference type="HAMAP-Rule" id="MF_01010"/>
    </source>
</evidence>
<protein>
    <recommendedName>
        <fullName evidence="1">23S rRNA (uracil(1939)-C(5))-methyltransferase RlmD</fullName>
        <ecNumber evidence="1">2.1.1.190</ecNumber>
    </recommendedName>
    <alternativeName>
        <fullName evidence="1">23S rRNA(m5U1939)-methyltransferase</fullName>
    </alternativeName>
</protein>
<sequence>MAQFFKAKPNSSKQLSAKLSLNVDQLDHLGAGIAQYQGKVVFIPGALPDETVTVQLTEQKKNYARAKLIKVDAQSPERVEPECPHYHTCGGCDLQHMSLSGQREHKEAALLDIMAKFAGTEGGALSPALTGEGWHYRRRARLATLFDKNTKHLSLGFRAASSSNVVPISQCQVLAKPLSDLIVPFAKLLNQLSAKASLGHLELIAADNGHFAVLRITKALNDKDLAKLSAFAEQHQIYICLQDNEGQFQGVGVELVLPVYQLLDENAQSDAVSLSFTPGNFVQVNSQINKAMVAQAMDWLAPAPDERILDLFCGMGNFSLPLAKMGADVIGVEGVAEMVSQARVNAKANNLDKLTFYHGDLSADLSLEPWMGKIDKLLLDPARAGAFESLQWLKKMKPRKVLYVSCNPASLARDSAVLLERGYRLQRLGLIDMFPQTHHIEAMALFELTK</sequence>
<reference key="1">
    <citation type="submission" date="2006-12" db="EMBL/GenBank/DDBJ databases">
        <title>Complete sequence of Shewanella sp. W3-18-1.</title>
        <authorList>
            <consortium name="US DOE Joint Genome Institute"/>
            <person name="Copeland A."/>
            <person name="Lucas S."/>
            <person name="Lapidus A."/>
            <person name="Barry K."/>
            <person name="Detter J.C."/>
            <person name="Glavina del Rio T."/>
            <person name="Hammon N."/>
            <person name="Israni S."/>
            <person name="Dalin E."/>
            <person name="Tice H."/>
            <person name="Pitluck S."/>
            <person name="Chain P."/>
            <person name="Malfatti S."/>
            <person name="Shin M."/>
            <person name="Vergez L."/>
            <person name="Schmutz J."/>
            <person name="Larimer F."/>
            <person name="Land M."/>
            <person name="Hauser L."/>
            <person name="Kyrpides N."/>
            <person name="Lykidis A."/>
            <person name="Tiedje J."/>
            <person name="Richardson P."/>
        </authorList>
    </citation>
    <scope>NUCLEOTIDE SEQUENCE [LARGE SCALE GENOMIC DNA]</scope>
    <source>
        <strain>W3-18-1</strain>
    </source>
</reference>
<name>RLMD_SHESW</name>